<proteinExistence type="inferred from homology"/>
<organism>
    <name type="scientific">Mus musculus</name>
    <name type="common">Mouse</name>
    <dbReference type="NCBI Taxonomy" id="10090"/>
    <lineage>
        <taxon>Eukaryota</taxon>
        <taxon>Metazoa</taxon>
        <taxon>Chordata</taxon>
        <taxon>Craniata</taxon>
        <taxon>Vertebrata</taxon>
        <taxon>Euteleostomi</taxon>
        <taxon>Mammalia</taxon>
        <taxon>Eutheria</taxon>
        <taxon>Euarchontoglires</taxon>
        <taxon>Glires</taxon>
        <taxon>Rodentia</taxon>
        <taxon>Myomorpha</taxon>
        <taxon>Muroidea</taxon>
        <taxon>Muridae</taxon>
        <taxon>Murinae</taxon>
        <taxon>Mus</taxon>
        <taxon>Mus</taxon>
    </lineage>
</organism>
<accession>J3QK54</accession>
<comment type="function">
    <text evidence="1 2 6 7">Microtubule-severing enzyme that negatively regulates cell migration and wound healing (PubMed:25756798). In migrating cells, targets dynamic microtubules (MTs) at the leading edge and severs them, thereby suppressing motility (By similarity). Microtubule severing releases ARHGEF2 which activates RHOA, which in turn regulates focal ahesion turnover via focal adhesion kinase, as opposed to F-actin polymerization, to suppress cell motility (By similarity). Negative regulator of axon regeneration that suppresses axonal growth by selectively severing dynamic MTs in the distal axon shaft and growth cone (PubMed:33872220). Contributes to proper cell branching during endothelial and neuronal development (By similarity).</text>
</comment>
<comment type="catalytic activity">
    <reaction evidence="3">
        <text>ATP + H2O = ADP + phosphate + H(+)</text>
        <dbReference type="Rhea" id="RHEA:13065"/>
        <dbReference type="ChEBI" id="CHEBI:15377"/>
        <dbReference type="ChEBI" id="CHEBI:15378"/>
        <dbReference type="ChEBI" id="CHEBI:30616"/>
        <dbReference type="ChEBI" id="CHEBI:43474"/>
        <dbReference type="ChEBI" id="CHEBI:456216"/>
    </reaction>
</comment>
<comment type="cofactor">
    <cofactor evidence="3">
        <name>Mg(2+)</name>
        <dbReference type="ChEBI" id="CHEBI:18420"/>
    </cofactor>
</comment>
<comment type="subcellular location">
    <subcellularLocation>
        <location evidence="1">Cytoplasm</location>
        <location evidence="1">Cell cortex</location>
    </subcellularLocation>
    <text evidence="1">Localizes at the leading edge of migrating cells.</text>
</comment>
<comment type="disruption phenotype">
    <text evidence="7">Knockout of Fignl2 in cultured adult dorsal root ganglion (DRG) neurons results in significantly longer axons and attenuated effects of inhibitory environmental cues on growth cone advancement. Neurons show high rations of tyrosinated tubulin and low rations of acetylated tubulin in the distal neurite region and an increase in the average ratio of dynamic to total MTs in the distal most segment of DRG neurites.</text>
</comment>
<comment type="similarity">
    <text evidence="8">Belongs to the AAA ATPase family.</text>
</comment>
<dbReference type="EC" id="3.6.4.-"/>
<dbReference type="EMBL" id="AC104834">
    <property type="status" value="NOT_ANNOTATED_CDS"/>
    <property type="molecule type" value="Genomic_DNA"/>
</dbReference>
<dbReference type="CCDS" id="CCDS57012.1"/>
<dbReference type="RefSeq" id="NP_001201840.1">
    <property type="nucleotide sequence ID" value="NM_001214911.3"/>
</dbReference>
<dbReference type="RefSeq" id="XP_006521345.1">
    <property type="nucleotide sequence ID" value="XM_006521282.1"/>
</dbReference>
<dbReference type="RefSeq" id="XP_006521346.1">
    <property type="nucleotide sequence ID" value="XM_006521283.1"/>
</dbReference>
<dbReference type="RefSeq" id="XP_006521347.1">
    <property type="nucleotide sequence ID" value="XM_006521284.1"/>
</dbReference>
<dbReference type="SMR" id="J3QK54"/>
<dbReference type="FunCoup" id="J3QK54">
    <property type="interactions" value="1"/>
</dbReference>
<dbReference type="STRING" id="10090.ENSMUSP00000137256"/>
<dbReference type="iPTMnet" id="J3QK54"/>
<dbReference type="PhosphoSitePlus" id="J3QK54"/>
<dbReference type="PaxDb" id="10090-ENSMUSP00000137256"/>
<dbReference type="ProteomicsDB" id="334800"/>
<dbReference type="Antibodypedia" id="78621">
    <property type="antibodies" value="7 antibodies from 4 providers"/>
</dbReference>
<dbReference type="Ensembl" id="ENSMUST00000178140.2">
    <property type="protein sequence ID" value="ENSMUSP00000137256.2"/>
    <property type="gene ID" value="ENSMUSG00000095440.3"/>
</dbReference>
<dbReference type="Ensembl" id="ENSMUST00000213610.2">
    <property type="protein sequence ID" value="ENSMUSP00000150618.2"/>
    <property type="gene ID" value="ENSMUSG00000095440.3"/>
</dbReference>
<dbReference type="GeneID" id="668225"/>
<dbReference type="KEGG" id="mmu:668225"/>
<dbReference type="UCSC" id="uc029sve.2">
    <property type="organism name" value="mouse"/>
</dbReference>
<dbReference type="AGR" id="MGI:3646919"/>
<dbReference type="CTD" id="401720"/>
<dbReference type="MGI" id="MGI:3646919">
    <property type="gene designation" value="Fignl2"/>
</dbReference>
<dbReference type="VEuPathDB" id="HostDB:ENSMUSG00000095440"/>
<dbReference type="eggNOG" id="KOG0740">
    <property type="taxonomic scope" value="Eukaryota"/>
</dbReference>
<dbReference type="GeneTree" id="ENSGT00940000161971"/>
<dbReference type="HOGENOM" id="CLU_000688_21_10_1"/>
<dbReference type="OMA" id="CPQPNAA"/>
<dbReference type="OrthoDB" id="8803010at2759"/>
<dbReference type="TreeFam" id="TF105015"/>
<dbReference type="BioGRID-ORCS" id="668225">
    <property type="hits" value="2 hits in 112 CRISPR screens"/>
</dbReference>
<dbReference type="Proteomes" id="UP000000589">
    <property type="component" value="Chromosome 15"/>
</dbReference>
<dbReference type="RNAct" id="J3QK54">
    <property type="molecule type" value="protein"/>
</dbReference>
<dbReference type="Bgee" id="ENSMUSG00000095440">
    <property type="expression patterns" value="Expressed in ectoplacental cone and 46 other cell types or tissues"/>
</dbReference>
<dbReference type="GO" id="GO:0005938">
    <property type="term" value="C:cell cortex"/>
    <property type="evidence" value="ECO:0007669"/>
    <property type="project" value="UniProtKB-SubCell"/>
</dbReference>
<dbReference type="GO" id="GO:0031252">
    <property type="term" value="C:cell leading edge"/>
    <property type="evidence" value="ECO:0000250"/>
    <property type="project" value="UniProtKB"/>
</dbReference>
<dbReference type="GO" id="GO:0005524">
    <property type="term" value="F:ATP binding"/>
    <property type="evidence" value="ECO:0007669"/>
    <property type="project" value="UniProtKB-KW"/>
</dbReference>
<dbReference type="GO" id="GO:0016887">
    <property type="term" value="F:ATP hydrolysis activity"/>
    <property type="evidence" value="ECO:0007669"/>
    <property type="project" value="InterPro"/>
</dbReference>
<dbReference type="GO" id="GO:0051013">
    <property type="term" value="P:microtubule severing"/>
    <property type="evidence" value="ECO:0000315"/>
    <property type="project" value="UniProtKB"/>
</dbReference>
<dbReference type="GO" id="GO:0001763">
    <property type="term" value="P:morphogenesis of a branching structure"/>
    <property type="evidence" value="ECO:0000250"/>
    <property type="project" value="UniProtKB"/>
</dbReference>
<dbReference type="GO" id="GO:0048681">
    <property type="term" value="P:negative regulation of axon regeneration"/>
    <property type="evidence" value="ECO:0000315"/>
    <property type="project" value="UniProtKB"/>
</dbReference>
<dbReference type="GO" id="GO:0030336">
    <property type="term" value="P:negative regulation of cell migration"/>
    <property type="evidence" value="ECO:0000315"/>
    <property type="project" value="UniProtKB"/>
</dbReference>
<dbReference type="GO" id="GO:1903690">
    <property type="term" value="P:negative regulation of wound healing, spreading of epidermal cells"/>
    <property type="evidence" value="ECO:0000315"/>
    <property type="project" value="UniProtKB"/>
</dbReference>
<dbReference type="FunFam" id="1.10.8.60:FF:000093">
    <property type="entry name" value="Fidgetin like 2"/>
    <property type="match status" value="1"/>
</dbReference>
<dbReference type="FunFam" id="3.40.50.300:FF:000495">
    <property type="entry name" value="Fidgetin like 2"/>
    <property type="match status" value="1"/>
</dbReference>
<dbReference type="Gene3D" id="1.10.8.60">
    <property type="match status" value="1"/>
</dbReference>
<dbReference type="Gene3D" id="3.40.50.300">
    <property type="entry name" value="P-loop containing nucleotide triphosphate hydrolases"/>
    <property type="match status" value="1"/>
</dbReference>
<dbReference type="InterPro" id="IPR003593">
    <property type="entry name" value="AAA+_ATPase"/>
</dbReference>
<dbReference type="InterPro" id="IPR003959">
    <property type="entry name" value="ATPase_AAA_core"/>
</dbReference>
<dbReference type="InterPro" id="IPR050304">
    <property type="entry name" value="MT-severing_AAA_ATPase"/>
</dbReference>
<dbReference type="InterPro" id="IPR027417">
    <property type="entry name" value="P-loop_NTPase"/>
</dbReference>
<dbReference type="PANTHER" id="PTHR23074">
    <property type="entry name" value="AAA DOMAIN-CONTAINING"/>
    <property type="match status" value="1"/>
</dbReference>
<dbReference type="PANTHER" id="PTHR23074:SF33">
    <property type="entry name" value="FIDGETIN-LIKE PROTEIN 2"/>
    <property type="match status" value="1"/>
</dbReference>
<dbReference type="Pfam" id="PF00004">
    <property type="entry name" value="AAA"/>
    <property type="match status" value="1"/>
</dbReference>
<dbReference type="SMART" id="SM00382">
    <property type="entry name" value="AAA"/>
    <property type="match status" value="1"/>
</dbReference>
<dbReference type="SUPFAM" id="SSF52540">
    <property type="entry name" value="P-loop containing nucleoside triphosphate hydrolases"/>
    <property type="match status" value="1"/>
</dbReference>
<name>FIGL2_MOUSE</name>
<gene>
    <name type="primary">Fignl2</name>
</gene>
<sequence length="644" mass="65922">MHWTPEHAQPLNQWPEQHLDVSSTTPSPAHKLELPPGGRQRCHYAWAHDDISALTASNLLKRYAEKYSGVLDYERPGLGSYGDAAFLNGAKGDPEPWPGPEPPYPLASLHEGLPGAKAAGAGGSAGLGGSPVVAGNLTEPLYTGNACGGPSAATEYAAGYGGGYLASGYCAQTSAALAPPPPPALLQPAPPPGYGPSAPLYNYPAAGYAAQPGYGALPPPAAPPAPYLPSGLAAPTPLPAPAPPRPAPYGFPAAAEGVSLKRKAVDEGAEARYRKYAYEPAKAPAADGASYPAADDTECRGNGFRSKPPGATEDGTGKYGGGGPLKVLGSPAYAPQLEPFDKFPERVPAAHGGFAEPSGEPAKGVDPGALELVSSKMVDCGPPVQWADVAGQGALKAALEEELLWPLLRPPACPGSALPPRTVLFFGPRGCGKALLGRCLATRLGATLLRLRGAGLAASGAVEGARLLQAAFAAARCRPPAVLLISELDALLPARDDGASLRAPLLTCLDGSCGARADGVLVVGTTSRPAALDEATRRRFALRFYVALPDGAARGQILQRALAQQGCALNERELAALVQGTQGFSGGELGQLCQQAAAEAGISGLQRPLSYKDVEAALAKVGSRAPSKELDSLVEWDKMYGSGH</sequence>
<evidence type="ECO:0000250" key="1">
    <source>
        <dbReference type="UniProtKB" id="A6NMB9"/>
    </source>
</evidence>
<evidence type="ECO:0000250" key="2">
    <source>
        <dbReference type="UniProtKB" id="E9QEA3"/>
    </source>
</evidence>
<evidence type="ECO:0000250" key="3">
    <source>
        <dbReference type="UniProtKB" id="O16299"/>
    </source>
</evidence>
<evidence type="ECO:0000250" key="4">
    <source>
        <dbReference type="UniProtKB" id="Q6PIW4"/>
    </source>
</evidence>
<evidence type="ECO:0000256" key="5">
    <source>
        <dbReference type="SAM" id="MobiDB-lite"/>
    </source>
</evidence>
<evidence type="ECO:0000269" key="6">
    <source>
    </source>
</evidence>
<evidence type="ECO:0000269" key="7">
    <source>
    </source>
</evidence>
<evidence type="ECO:0000305" key="8"/>
<feature type="chain" id="PRO_0000460144" description="Fidgetin-like protein 2">
    <location>
        <begin position="1"/>
        <end position="644"/>
    </location>
</feature>
<feature type="region of interest" description="Disordered" evidence="5">
    <location>
        <begin position="1"/>
        <end position="36"/>
    </location>
</feature>
<feature type="region of interest" description="Disordered" evidence="5">
    <location>
        <begin position="285"/>
        <end position="323"/>
    </location>
</feature>
<feature type="compositionally biased region" description="Polar residues" evidence="5">
    <location>
        <begin position="10"/>
        <end position="27"/>
    </location>
</feature>
<feature type="compositionally biased region" description="Low complexity" evidence="5">
    <location>
        <begin position="285"/>
        <end position="294"/>
    </location>
</feature>
<feature type="binding site" evidence="4">
    <location>
        <position position="390"/>
    </location>
    <ligand>
        <name>ATP</name>
        <dbReference type="ChEBI" id="CHEBI:30616"/>
    </ligand>
</feature>
<feature type="binding site" evidence="4">
    <location>
        <begin position="430"/>
        <end position="435"/>
    </location>
    <ligand>
        <name>ATP</name>
        <dbReference type="ChEBI" id="CHEBI:30616"/>
    </ligand>
</feature>
<protein>
    <recommendedName>
        <fullName>Fidgetin-like protein 2</fullName>
        <ecNumber>3.6.4.-</ecNumber>
    </recommendedName>
</protein>
<keyword id="KW-0067">ATP-binding</keyword>
<keyword id="KW-0963">Cytoplasm</keyword>
<keyword id="KW-0378">Hydrolase</keyword>
<keyword id="KW-0547">Nucleotide-binding</keyword>
<keyword id="KW-1185">Reference proteome</keyword>
<reference key="1">
    <citation type="journal article" date="2009" name="PLoS Biol.">
        <title>Lineage-specific biology revealed by a finished genome assembly of the mouse.</title>
        <authorList>
            <person name="Church D.M."/>
            <person name="Goodstadt L."/>
            <person name="Hillier L.W."/>
            <person name="Zody M.C."/>
            <person name="Goldstein S."/>
            <person name="She X."/>
            <person name="Bult C.J."/>
            <person name="Agarwala R."/>
            <person name="Cherry J.L."/>
            <person name="DiCuccio M."/>
            <person name="Hlavina W."/>
            <person name="Kapustin Y."/>
            <person name="Meric P."/>
            <person name="Maglott D."/>
            <person name="Birtle Z."/>
            <person name="Marques A.C."/>
            <person name="Graves T."/>
            <person name="Zhou S."/>
            <person name="Teague B."/>
            <person name="Potamousis K."/>
            <person name="Churas C."/>
            <person name="Place M."/>
            <person name="Herschleb J."/>
            <person name="Runnheim R."/>
            <person name="Forrest D."/>
            <person name="Amos-Landgraf J."/>
            <person name="Schwartz D.C."/>
            <person name="Cheng Z."/>
            <person name="Lindblad-Toh K."/>
            <person name="Eichler E.E."/>
            <person name="Ponting C.P."/>
        </authorList>
    </citation>
    <scope>NUCLEOTIDE SEQUENCE [LARGE SCALE GENOMIC DNA]</scope>
    <source>
        <strain>C57BL/6J</strain>
    </source>
</reference>
<reference key="2">
    <citation type="journal article" date="2015" name="J. Invest. Dermatol.">
        <title>Fidgetin-Like 2: A Microtubule-Based Regulator of Wound Healing.</title>
        <authorList>
            <person name="Charafeddine R.A."/>
            <person name="Makdisi J."/>
            <person name="Schairer D."/>
            <person name="O'Rourke B.P."/>
            <person name="Diaz-Valencia J.D."/>
            <person name="Chouake J."/>
            <person name="Kutner A."/>
            <person name="Krausz A."/>
            <person name="Adler B."/>
            <person name="Nacharaju P."/>
            <person name="Liang H."/>
            <person name="Mukherjee S."/>
            <person name="Friedman J.M."/>
            <person name="Friedman A."/>
            <person name="Nosanchuk J.D."/>
            <person name="Sharp D.J."/>
        </authorList>
    </citation>
    <scope>FUNCTION</scope>
</reference>
<reference key="3">
    <citation type="journal article" date="2021" name="JCI Insight">
        <title>Fidgetin-like 2 negatively regulates axonal growth and can be targeted to promote functional nerve regeneration.</title>
        <authorList>
            <person name="Baker L."/>
            <person name="Tar M."/>
            <person name="Kramer A.H."/>
            <person name="Villegas G.A."/>
            <person name="Charafeddine R.A."/>
            <person name="Vafaeva O."/>
            <person name="Nacharaju P."/>
            <person name="Friedman J."/>
            <person name="Davies K.P."/>
            <person name="Sharp D.J."/>
        </authorList>
    </citation>
    <scope>FUNCTION</scope>
    <scope>DISRUPTION PHENOTYPE</scope>
</reference>